<gene>
    <name type="primary">HSP18.1</name>
</gene>
<accession>P19243</accession>
<comment type="subunit">
    <text>Forms oligomeric structures.</text>
</comment>
<comment type="interaction">
    <interactant intactId="EBI-15802012">
        <id>P19243</id>
    </interactant>
    <interactant intactId="EBI-15802012">
        <id>P19243</id>
        <label>HSP18.1</label>
    </interactant>
    <organismsDiffer>false</organismsDiffer>
    <experiments>3</experiments>
</comment>
<comment type="subcellular location">
    <subcellularLocation>
        <location>Cytoplasm</location>
    </subcellularLocation>
</comment>
<comment type="similarity">
    <text evidence="1">Belongs to the small heat shock protein (HSP20) family.</text>
</comment>
<proteinExistence type="evidence at protein level"/>
<sequence>MSLIPSFFSGRRSNVFDPFSLDVWDPLKDFPFSNSSPSASFPRENPAFVSTRVDWKETPEAHVFKADLPGLKKEEVKVEVEDDRVLQISGERSVEKEDKNDEWHRVERSSGKFLRRFRLPENAKMDKVKASMENGVLTVTVPKEEIKKAEVKSIEISG</sequence>
<organism>
    <name type="scientific">Pisum sativum</name>
    <name type="common">Garden pea</name>
    <name type="synonym">Lathyrus oleraceus</name>
    <dbReference type="NCBI Taxonomy" id="3888"/>
    <lineage>
        <taxon>Eukaryota</taxon>
        <taxon>Viridiplantae</taxon>
        <taxon>Streptophyta</taxon>
        <taxon>Embryophyta</taxon>
        <taxon>Tracheophyta</taxon>
        <taxon>Spermatophyta</taxon>
        <taxon>Magnoliopsida</taxon>
        <taxon>eudicotyledons</taxon>
        <taxon>Gunneridae</taxon>
        <taxon>Pentapetalae</taxon>
        <taxon>rosids</taxon>
        <taxon>fabids</taxon>
        <taxon>Fabales</taxon>
        <taxon>Fabaceae</taxon>
        <taxon>Papilionoideae</taxon>
        <taxon>50 kb inversion clade</taxon>
        <taxon>NPAAA clade</taxon>
        <taxon>Hologalegina</taxon>
        <taxon>IRL clade</taxon>
        <taxon>Fabeae</taxon>
        <taxon>Pisum</taxon>
    </lineage>
</organism>
<protein>
    <recommendedName>
        <fullName>18.1 kDa class I heat shock protein</fullName>
    </recommendedName>
    <alternativeName>
        <fullName>HSP 18.1</fullName>
    </alternativeName>
</protein>
<evidence type="ECO:0000255" key="1">
    <source>
        <dbReference type="PROSITE-ProRule" id="PRU00285"/>
    </source>
</evidence>
<evidence type="ECO:0007829" key="2">
    <source>
        <dbReference type="PDB" id="5DS2"/>
    </source>
</evidence>
<dbReference type="EMBL" id="M33899">
    <property type="protein sequence ID" value="AAA33672.1"/>
    <property type="molecule type" value="mRNA"/>
</dbReference>
<dbReference type="PDB" id="5DS2">
    <property type="method" value="X-ray"/>
    <property type="resolution" value="1.85 A"/>
    <property type="chains" value="A/B/C/D/E/F=50-143"/>
</dbReference>
<dbReference type="PDBsum" id="5DS2"/>
<dbReference type="SMR" id="P19243"/>
<dbReference type="DIP" id="DIP-48960N"/>
<dbReference type="GO" id="GO:0005737">
    <property type="term" value="C:cytoplasm"/>
    <property type="evidence" value="ECO:0007669"/>
    <property type="project" value="UniProtKB-SubCell"/>
</dbReference>
<dbReference type="GO" id="GO:0032991">
    <property type="term" value="C:protein-containing complex"/>
    <property type="evidence" value="ECO:0000315"/>
    <property type="project" value="CAFA"/>
</dbReference>
<dbReference type="GO" id="GO:0042802">
    <property type="term" value="F:identical protein binding"/>
    <property type="evidence" value="ECO:0000353"/>
    <property type="project" value="IntAct"/>
</dbReference>
<dbReference type="GO" id="GO:0050821">
    <property type="term" value="P:protein stabilization"/>
    <property type="evidence" value="ECO:0000315"/>
    <property type="project" value="CAFA"/>
</dbReference>
<dbReference type="CDD" id="cd06472">
    <property type="entry name" value="ACD_ScHsp26_like"/>
    <property type="match status" value="1"/>
</dbReference>
<dbReference type="FunFam" id="2.60.40.790:FF:000009">
    <property type="entry name" value="17.6 kDa class I heat shock protein-like"/>
    <property type="match status" value="1"/>
</dbReference>
<dbReference type="Gene3D" id="2.60.40.790">
    <property type="match status" value="1"/>
</dbReference>
<dbReference type="InterPro" id="IPR002068">
    <property type="entry name" value="A-crystallin/Hsp20_dom"/>
</dbReference>
<dbReference type="InterPro" id="IPR008978">
    <property type="entry name" value="HSP20-like_chaperone"/>
</dbReference>
<dbReference type="InterPro" id="IPR031107">
    <property type="entry name" value="Small_HSP"/>
</dbReference>
<dbReference type="PANTHER" id="PTHR11527">
    <property type="entry name" value="HEAT-SHOCK PROTEIN 20 FAMILY MEMBER"/>
    <property type="match status" value="1"/>
</dbReference>
<dbReference type="Pfam" id="PF00011">
    <property type="entry name" value="HSP20"/>
    <property type="match status" value="1"/>
</dbReference>
<dbReference type="SUPFAM" id="SSF49764">
    <property type="entry name" value="HSP20-like chaperones"/>
    <property type="match status" value="1"/>
</dbReference>
<dbReference type="PROSITE" id="PS01031">
    <property type="entry name" value="SHSP"/>
    <property type="match status" value="1"/>
</dbReference>
<keyword id="KW-0002">3D-structure</keyword>
<keyword id="KW-0963">Cytoplasm</keyword>
<keyword id="KW-0346">Stress response</keyword>
<reference key="1">
    <citation type="journal article" date="1990" name="Nucleic Acids Res.">
        <title>A cDNA clone from Pisum sativum encoding a low molecular weight heat shock protein.</title>
        <authorList>
            <person name="Lauzon L.M."/>
            <person name="Helm K.W."/>
            <person name="Vierling E."/>
        </authorList>
    </citation>
    <scope>NUCLEOTIDE SEQUENCE [MRNA]</scope>
</reference>
<name>HSP11_PEA</name>
<feature type="chain" id="PRO_0000125982" description="18.1 kDa class I heat shock protein">
    <location>
        <begin position="1"/>
        <end position="158"/>
    </location>
</feature>
<feature type="domain" description="sHSP" evidence="1">
    <location>
        <begin position="44"/>
        <end position="158"/>
    </location>
</feature>
<feature type="strand" evidence="2">
    <location>
        <begin position="53"/>
        <end position="57"/>
    </location>
</feature>
<feature type="strand" evidence="2">
    <location>
        <begin position="59"/>
        <end position="67"/>
    </location>
</feature>
<feature type="helix" evidence="2">
    <location>
        <begin position="73"/>
        <end position="75"/>
    </location>
</feature>
<feature type="strand" evidence="2">
    <location>
        <begin position="76"/>
        <end position="81"/>
    </location>
</feature>
<feature type="turn" evidence="2">
    <location>
        <begin position="82"/>
        <end position="84"/>
    </location>
</feature>
<feature type="strand" evidence="2">
    <location>
        <begin position="85"/>
        <end position="92"/>
    </location>
</feature>
<feature type="strand" evidence="2">
    <location>
        <begin position="102"/>
        <end position="105"/>
    </location>
</feature>
<feature type="strand" evidence="2">
    <location>
        <begin position="110"/>
        <end position="118"/>
    </location>
</feature>
<feature type="helix" evidence="2">
    <location>
        <begin position="125"/>
        <end position="127"/>
    </location>
</feature>
<feature type="strand" evidence="2">
    <location>
        <begin position="129"/>
        <end position="133"/>
    </location>
</feature>
<feature type="strand" evidence="2">
    <location>
        <begin position="136"/>
        <end position="142"/>
    </location>
</feature>